<comment type="function">
    <text evidence="2">Has a role in meiosis.</text>
</comment>
<comment type="subcellular location">
    <subcellularLocation>
        <location evidence="3">Cytoplasm</location>
    </subcellularLocation>
    <subcellularLocation>
        <location evidence="3">Nucleus</location>
    </subcellularLocation>
</comment>
<feature type="chain" id="PRO_0000116650" description="Meiotically up-regulated gene 108 protein">
    <location>
        <begin position="1"/>
        <end position="150"/>
    </location>
</feature>
<feature type="region of interest" description="Disordered" evidence="1">
    <location>
        <begin position="1"/>
        <end position="150"/>
    </location>
</feature>
<feature type="compositionally biased region" description="Polar residues" evidence="1">
    <location>
        <begin position="1"/>
        <end position="11"/>
    </location>
</feature>
<feature type="compositionally biased region" description="Basic and acidic residues" evidence="1">
    <location>
        <begin position="12"/>
        <end position="23"/>
    </location>
</feature>
<feature type="compositionally biased region" description="Polar residues" evidence="1">
    <location>
        <begin position="83"/>
        <end position="93"/>
    </location>
</feature>
<organism>
    <name type="scientific">Schizosaccharomyces pombe (strain 972 / ATCC 24843)</name>
    <name type="common">Fission yeast</name>
    <dbReference type="NCBI Taxonomy" id="284812"/>
    <lineage>
        <taxon>Eukaryota</taxon>
        <taxon>Fungi</taxon>
        <taxon>Dikarya</taxon>
        <taxon>Ascomycota</taxon>
        <taxon>Taphrinomycotina</taxon>
        <taxon>Schizosaccharomycetes</taxon>
        <taxon>Schizosaccharomycetales</taxon>
        <taxon>Schizosaccharomycetaceae</taxon>
        <taxon>Schizosaccharomyces</taxon>
    </lineage>
</organism>
<sequence length="150" mass="16781">MANRFTSSDQTQETHGHHVDKHSFSGRQRHPSMGVHSFNEYMNEYPEAGPLVQEEEDDMESSSYHATQEDIGDDDSRSESTRNRSSQHTGRVNFSSLGGLGSIFGGKKSRSKSANGTQKKNANNNEEQLDEEEQNDPYLDRDISLLGSTI</sequence>
<name>MU108_SCHPO</name>
<accession>O14015</accession>
<protein>
    <recommendedName>
        <fullName>Meiotically up-regulated gene 108 protein</fullName>
    </recommendedName>
</protein>
<gene>
    <name type="primary">mug108</name>
    <name type="ORF">SPAC29A4.12c</name>
</gene>
<reference key="1">
    <citation type="journal article" date="2002" name="Nature">
        <title>The genome sequence of Schizosaccharomyces pombe.</title>
        <authorList>
            <person name="Wood V."/>
            <person name="Gwilliam R."/>
            <person name="Rajandream M.A."/>
            <person name="Lyne M.H."/>
            <person name="Lyne R."/>
            <person name="Stewart A."/>
            <person name="Sgouros J.G."/>
            <person name="Peat N."/>
            <person name="Hayles J."/>
            <person name="Baker S.G."/>
            <person name="Basham D."/>
            <person name="Bowman S."/>
            <person name="Brooks K."/>
            <person name="Brown D."/>
            <person name="Brown S."/>
            <person name="Chillingworth T."/>
            <person name="Churcher C.M."/>
            <person name="Collins M."/>
            <person name="Connor R."/>
            <person name="Cronin A."/>
            <person name="Davis P."/>
            <person name="Feltwell T."/>
            <person name="Fraser A."/>
            <person name="Gentles S."/>
            <person name="Goble A."/>
            <person name="Hamlin N."/>
            <person name="Harris D.E."/>
            <person name="Hidalgo J."/>
            <person name="Hodgson G."/>
            <person name="Holroyd S."/>
            <person name="Hornsby T."/>
            <person name="Howarth S."/>
            <person name="Huckle E.J."/>
            <person name="Hunt S."/>
            <person name="Jagels K."/>
            <person name="James K.D."/>
            <person name="Jones L."/>
            <person name="Jones M."/>
            <person name="Leather S."/>
            <person name="McDonald S."/>
            <person name="McLean J."/>
            <person name="Mooney P."/>
            <person name="Moule S."/>
            <person name="Mungall K.L."/>
            <person name="Murphy L.D."/>
            <person name="Niblett D."/>
            <person name="Odell C."/>
            <person name="Oliver K."/>
            <person name="O'Neil S."/>
            <person name="Pearson D."/>
            <person name="Quail M.A."/>
            <person name="Rabbinowitsch E."/>
            <person name="Rutherford K.M."/>
            <person name="Rutter S."/>
            <person name="Saunders D."/>
            <person name="Seeger K."/>
            <person name="Sharp S."/>
            <person name="Skelton J."/>
            <person name="Simmonds M.N."/>
            <person name="Squares R."/>
            <person name="Squares S."/>
            <person name="Stevens K."/>
            <person name="Taylor K."/>
            <person name="Taylor R.G."/>
            <person name="Tivey A."/>
            <person name="Walsh S.V."/>
            <person name="Warren T."/>
            <person name="Whitehead S."/>
            <person name="Woodward J.R."/>
            <person name="Volckaert G."/>
            <person name="Aert R."/>
            <person name="Robben J."/>
            <person name="Grymonprez B."/>
            <person name="Weltjens I."/>
            <person name="Vanstreels E."/>
            <person name="Rieger M."/>
            <person name="Schaefer M."/>
            <person name="Mueller-Auer S."/>
            <person name="Gabel C."/>
            <person name="Fuchs M."/>
            <person name="Duesterhoeft A."/>
            <person name="Fritzc C."/>
            <person name="Holzer E."/>
            <person name="Moestl D."/>
            <person name="Hilbert H."/>
            <person name="Borzym K."/>
            <person name="Langer I."/>
            <person name="Beck A."/>
            <person name="Lehrach H."/>
            <person name="Reinhardt R."/>
            <person name="Pohl T.M."/>
            <person name="Eger P."/>
            <person name="Zimmermann W."/>
            <person name="Wedler H."/>
            <person name="Wambutt R."/>
            <person name="Purnelle B."/>
            <person name="Goffeau A."/>
            <person name="Cadieu E."/>
            <person name="Dreano S."/>
            <person name="Gloux S."/>
            <person name="Lelaure V."/>
            <person name="Mottier S."/>
            <person name="Galibert F."/>
            <person name="Aves S.J."/>
            <person name="Xiang Z."/>
            <person name="Hunt C."/>
            <person name="Moore K."/>
            <person name="Hurst S.M."/>
            <person name="Lucas M."/>
            <person name="Rochet M."/>
            <person name="Gaillardin C."/>
            <person name="Tallada V.A."/>
            <person name="Garzon A."/>
            <person name="Thode G."/>
            <person name="Daga R.R."/>
            <person name="Cruzado L."/>
            <person name="Jimenez J."/>
            <person name="Sanchez M."/>
            <person name="del Rey F."/>
            <person name="Benito J."/>
            <person name="Dominguez A."/>
            <person name="Revuelta J.L."/>
            <person name="Moreno S."/>
            <person name="Armstrong J."/>
            <person name="Forsburg S.L."/>
            <person name="Cerutti L."/>
            <person name="Lowe T."/>
            <person name="McCombie W.R."/>
            <person name="Paulsen I."/>
            <person name="Potashkin J."/>
            <person name="Shpakovski G.V."/>
            <person name="Ussery D."/>
            <person name="Barrell B.G."/>
            <person name="Nurse P."/>
        </authorList>
    </citation>
    <scope>NUCLEOTIDE SEQUENCE [LARGE SCALE GENOMIC DNA]</scope>
    <source>
        <strain>972 / ATCC 24843</strain>
    </source>
</reference>
<reference key="2">
    <citation type="journal article" date="2005" name="Curr. Biol.">
        <title>A large-scale screen in S. pombe identifies seven novel genes required for critical meiotic events.</title>
        <authorList>
            <person name="Martin-Castellanos C."/>
            <person name="Blanco M."/>
            <person name="Rozalen A.E."/>
            <person name="Perez-Hidalgo L."/>
            <person name="Garcia A.I."/>
            <person name="Conde F."/>
            <person name="Mata J."/>
            <person name="Ellermeier C."/>
            <person name="Davis L."/>
            <person name="San-Segundo P."/>
            <person name="Smith G.R."/>
            <person name="Moreno S."/>
        </authorList>
    </citation>
    <scope>FUNCTION IN MEIOSIS</scope>
</reference>
<reference key="3">
    <citation type="journal article" date="2006" name="Nat. Biotechnol.">
        <title>ORFeome cloning and global analysis of protein localization in the fission yeast Schizosaccharomyces pombe.</title>
        <authorList>
            <person name="Matsuyama A."/>
            <person name="Arai R."/>
            <person name="Yashiroda Y."/>
            <person name="Shirai A."/>
            <person name="Kamata A."/>
            <person name="Sekido S."/>
            <person name="Kobayashi Y."/>
            <person name="Hashimoto A."/>
            <person name="Hamamoto M."/>
            <person name="Hiraoka Y."/>
            <person name="Horinouchi S."/>
            <person name="Yoshida M."/>
        </authorList>
    </citation>
    <scope>SUBCELLULAR LOCATION [LARGE SCALE ANALYSIS]</scope>
</reference>
<dbReference type="EMBL" id="CU329670">
    <property type="protein sequence ID" value="CAB10139.1"/>
    <property type="molecule type" value="Genomic_DNA"/>
</dbReference>
<dbReference type="PIR" id="T38477">
    <property type="entry name" value="T38477"/>
</dbReference>
<dbReference type="RefSeq" id="NP_594870.1">
    <property type="nucleotide sequence ID" value="NM_001020299.2"/>
</dbReference>
<dbReference type="STRING" id="284812.O14015"/>
<dbReference type="PaxDb" id="4896-SPAC29A4.12c.1"/>
<dbReference type="EnsemblFungi" id="SPAC29A4.12c.1">
    <property type="protein sequence ID" value="SPAC29A4.12c.1:pep"/>
    <property type="gene ID" value="SPAC29A4.12c"/>
</dbReference>
<dbReference type="GeneID" id="2542356"/>
<dbReference type="KEGG" id="spo:2542356"/>
<dbReference type="PomBase" id="SPAC29A4.12c">
    <property type="gene designation" value="mug108"/>
</dbReference>
<dbReference type="VEuPathDB" id="FungiDB:SPAC29A4.12c"/>
<dbReference type="HOGENOM" id="CLU_1723404_0_0_1"/>
<dbReference type="InParanoid" id="O14015"/>
<dbReference type="OMA" id="MESSSYH"/>
<dbReference type="PRO" id="PR:O14015"/>
<dbReference type="Proteomes" id="UP000002485">
    <property type="component" value="Chromosome I"/>
</dbReference>
<dbReference type="GO" id="GO:0005829">
    <property type="term" value="C:cytosol"/>
    <property type="evidence" value="ECO:0007005"/>
    <property type="project" value="PomBase"/>
</dbReference>
<dbReference type="GO" id="GO:0005634">
    <property type="term" value="C:nucleus"/>
    <property type="evidence" value="ECO:0007005"/>
    <property type="project" value="PomBase"/>
</dbReference>
<dbReference type="GO" id="GO:0051321">
    <property type="term" value="P:meiotic cell cycle"/>
    <property type="evidence" value="ECO:0007669"/>
    <property type="project" value="UniProtKB-KW"/>
</dbReference>
<keyword id="KW-0963">Cytoplasm</keyword>
<keyword id="KW-0469">Meiosis</keyword>
<keyword id="KW-0539">Nucleus</keyword>
<keyword id="KW-1185">Reference proteome</keyword>
<evidence type="ECO:0000256" key="1">
    <source>
        <dbReference type="SAM" id="MobiDB-lite"/>
    </source>
</evidence>
<evidence type="ECO:0000269" key="2">
    <source>
    </source>
</evidence>
<evidence type="ECO:0000269" key="3">
    <source>
    </source>
</evidence>
<proteinExistence type="evidence at protein level"/>